<proteinExistence type="inferred from homology"/>
<gene>
    <name evidence="1" type="primary">eno</name>
    <name type="ordered locus">Dshi_2145</name>
</gene>
<dbReference type="EC" id="4.2.1.11" evidence="1"/>
<dbReference type="EMBL" id="CP000830">
    <property type="protein sequence ID" value="ABV93881.1"/>
    <property type="molecule type" value="Genomic_DNA"/>
</dbReference>
<dbReference type="RefSeq" id="WP_012178813.1">
    <property type="nucleotide sequence ID" value="NC_009952.1"/>
</dbReference>
<dbReference type="SMR" id="A8LQL4"/>
<dbReference type="STRING" id="398580.Dshi_2145"/>
<dbReference type="KEGG" id="dsh:Dshi_2145"/>
<dbReference type="eggNOG" id="COG0148">
    <property type="taxonomic scope" value="Bacteria"/>
</dbReference>
<dbReference type="HOGENOM" id="CLU_031223_2_1_5"/>
<dbReference type="OrthoDB" id="9804716at2"/>
<dbReference type="UniPathway" id="UPA00109">
    <property type="reaction ID" value="UER00187"/>
</dbReference>
<dbReference type="Proteomes" id="UP000006833">
    <property type="component" value="Chromosome"/>
</dbReference>
<dbReference type="GO" id="GO:0009986">
    <property type="term" value="C:cell surface"/>
    <property type="evidence" value="ECO:0007669"/>
    <property type="project" value="UniProtKB-SubCell"/>
</dbReference>
<dbReference type="GO" id="GO:0005576">
    <property type="term" value="C:extracellular region"/>
    <property type="evidence" value="ECO:0007669"/>
    <property type="project" value="UniProtKB-SubCell"/>
</dbReference>
<dbReference type="GO" id="GO:0000015">
    <property type="term" value="C:phosphopyruvate hydratase complex"/>
    <property type="evidence" value="ECO:0007669"/>
    <property type="project" value="InterPro"/>
</dbReference>
<dbReference type="GO" id="GO:0000287">
    <property type="term" value="F:magnesium ion binding"/>
    <property type="evidence" value="ECO:0007669"/>
    <property type="project" value="UniProtKB-UniRule"/>
</dbReference>
<dbReference type="GO" id="GO:0004634">
    <property type="term" value="F:phosphopyruvate hydratase activity"/>
    <property type="evidence" value="ECO:0007669"/>
    <property type="project" value="UniProtKB-UniRule"/>
</dbReference>
<dbReference type="GO" id="GO:0006096">
    <property type="term" value="P:glycolytic process"/>
    <property type="evidence" value="ECO:0007669"/>
    <property type="project" value="UniProtKB-UniRule"/>
</dbReference>
<dbReference type="CDD" id="cd03313">
    <property type="entry name" value="enolase"/>
    <property type="match status" value="1"/>
</dbReference>
<dbReference type="FunFam" id="3.20.20.120:FF:000001">
    <property type="entry name" value="Enolase"/>
    <property type="match status" value="1"/>
</dbReference>
<dbReference type="FunFam" id="3.30.390.10:FF:000001">
    <property type="entry name" value="Enolase"/>
    <property type="match status" value="1"/>
</dbReference>
<dbReference type="Gene3D" id="3.20.20.120">
    <property type="entry name" value="Enolase-like C-terminal domain"/>
    <property type="match status" value="1"/>
</dbReference>
<dbReference type="Gene3D" id="3.30.390.10">
    <property type="entry name" value="Enolase-like, N-terminal domain"/>
    <property type="match status" value="1"/>
</dbReference>
<dbReference type="HAMAP" id="MF_00318">
    <property type="entry name" value="Enolase"/>
    <property type="match status" value="1"/>
</dbReference>
<dbReference type="InterPro" id="IPR000941">
    <property type="entry name" value="Enolase"/>
</dbReference>
<dbReference type="InterPro" id="IPR036849">
    <property type="entry name" value="Enolase-like_C_sf"/>
</dbReference>
<dbReference type="InterPro" id="IPR029017">
    <property type="entry name" value="Enolase-like_N"/>
</dbReference>
<dbReference type="InterPro" id="IPR020810">
    <property type="entry name" value="Enolase_C"/>
</dbReference>
<dbReference type="InterPro" id="IPR020809">
    <property type="entry name" value="Enolase_CS"/>
</dbReference>
<dbReference type="InterPro" id="IPR020811">
    <property type="entry name" value="Enolase_N"/>
</dbReference>
<dbReference type="NCBIfam" id="TIGR01060">
    <property type="entry name" value="eno"/>
    <property type="match status" value="1"/>
</dbReference>
<dbReference type="PANTHER" id="PTHR11902">
    <property type="entry name" value="ENOLASE"/>
    <property type="match status" value="1"/>
</dbReference>
<dbReference type="PANTHER" id="PTHR11902:SF1">
    <property type="entry name" value="ENOLASE"/>
    <property type="match status" value="1"/>
</dbReference>
<dbReference type="Pfam" id="PF00113">
    <property type="entry name" value="Enolase_C"/>
    <property type="match status" value="1"/>
</dbReference>
<dbReference type="Pfam" id="PF03952">
    <property type="entry name" value="Enolase_N"/>
    <property type="match status" value="1"/>
</dbReference>
<dbReference type="PIRSF" id="PIRSF001400">
    <property type="entry name" value="Enolase"/>
    <property type="match status" value="1"/>
</dbReference>
<dbReference type="PRINTS" id="PR00148">
    <property type="entry name" value="ENOLASE"/>
</dbReference>
<dbReference type="SFLD" id="SFLDF00002">
    <property type="entry name" value="enolase"/>
    <property type="match status" value="1"/>
</dbReference>
<dbReference type="SFLD" id="SFLDG00178">
    <property type="entry name" value="enolase"/>
    <property type="match status" value="1"/>
</dbReference>
<dbReference type="SMART" id="SM01192">
    <property type="entry name" value="Enolase_C"/>
    <property type="match status" value="1"/>
</dbReference>
<dbReference type="SMART" id="SM01193">
    <property type="entry name" value="Enolase_N"/>
    <property type="match status" value="1"/>
</dbReference>
<dbReference type="SUPFAM" id="SSF51604">
    <property type="entry name" value="Enolase C-terminal domain-like"/>
    <property type="match status" value="1"/>
</dbReference>
<dbReference type="SUPFAM" id="SSF54826">
    <property type="entry name" value="Enolase N-terminal domain-like"/>
    <property type="match status" value="1"/>
</dbReference>
<dbReference type="PROSITE" id="PS00164">
    <property type="entry name" value="ENOLASE"/>
    <property type="match status" value="1"/>
</dbReference>
<name>ENO_DINSH</name>
<keyword id="KW-0963">Cytoplasm</keyword>
<keyword id="KW-0324">Glycolysis</keyword>
<keyword id="KW-0456">Lyase</keyword>
<keyword id="KW-0460">Magnesium</keyword>
<keyword id="KW-0479">Metal-binding</keyword>
<keyword id="KW-1185">Reference proteome</keyword>
<keyword id="KW-0964">Secreted</keyword>
<feature type="chain" id="PRO_1000079133" description="Enolase">
    <location>
        <begin position="1"/>
        <end position="424"/>
    </location>
</feature>
<feature type="active site" description="Proton donor" evidence="1">
    <location>
        <position position="205"/>
    </location>
</feature>
<feature type="active site" description="Proton acceptor" evidence="1">
    <location>
        <position position="337"/>
    </location>
</feature>
<feature type="binding site" evidence="1">
    <location>
        <position position="163"/>
    </location>
    <ligand>
        <name>(2R)-2-phosphoglycerate</name>
        <dbReference type="ChEBI" id="CHEBI:58289"/>
    </ligand>
</feature>
<feature type="binding site" evidence="1">
    <location>
        <position position="242"/>
    </location>
    <ligand>
        <name>Mg(2+)</name>
        <dbReference type="ChEBI" id="CHEBI:18420"/>
    </ligand>
</feature>
<feature type="binding site" evidence="1">
    <location>
        <position position="285"/>
    </location>
    <ligand>
        <name>Mg(2+)</name>
        <dbReference type="ChEBI" id="CHEBI:18420"/>
    </ligand>
</feature>
<feature type="binding site" evidence="1">
    <location>
        <position position="312"/>
    </location>
    <ligand>
        <name>Mg(2+)</name>
        <dbReference type="ChEBI" id="CHEBI:18420"/>
    </ligand>
</feature>
<feature type="binding site" evidence="1">
    <location>
        <position position="337"/>
    </location>
    <ligand>
        <name>(2R)-2-phosphoglycerate</name>
        <dbReference type="ChEBI" id="CHEBI:58289"/>
    </ligand>
</feature>
<feature type="binding site" evidence="1">
    <location>
        <position position="366"/>
    </location>
    <ligand>
        <name>(2R)-2-phosphoglycerate</name>
        <dbReference type="ChEBI" id="CHEBI:58289"/>
    </ligand>
</feature>
<feature type="binding site" evidence="1">
    <location>
        <position position="367"/>
    </location>
    <ligand>
        <name>(2R)-2-phosphoglycerate</name>
        <dbReference type="ChEBI" id="CHEBI:58289"/>
    </ligand>
</feature>
<feature type="binding site" evidence="1">
    <location>
        <position position="388"/>
    </location>
    <ligand>
        <name>(2R)-2-phosphoglycerate</name>
        <dbReference type="ChEBI" id="CHEBI:58289"/>
    </ligand>
</feature>
<protein>
    <recommendedName>
        <fullName evidence="1">Enolase</fullName>
        <ecNumber evidence="1">4.2.1.11</ecNumber>
    </recommendedName>
    <alternativeName>
        <fullName evidence="1">2-phospho-D-glycerate hydro-lyase</fullName>
    </alternativeName>
    <alternativeName>
        <fullName evidence="1">2-phosphoglycerate dehydratase</fullName>
    </alternativeName>
</protein>
<reference key="1">
    <citation type="journal article" date="2010" name="ISME J.">
        <title>The complete genome sequence of the algal symbiont Dinoroseobacter shibae: a hitchhiker's guide to life in the sea.</title>
        <authorList>
            <person name="Wagner-Dobler I."/>
            <person name="Ballhausen B."/>
            <person name="Berger M."/>
            <person name="Brinkhoff T."/>
            <person name="Buchholz I."/>
            <person name="Bunk B."/>
            <person name="Cypionka H."/>
            <person name="Daniel R."/>
            <person name="Drepper T."/>
            <person name="Gerdts G."/>
            <person name="Hahnke S."/>
            <person name="Han C."/>
            <person name="Jahn D."/>
            <person name="Kalhoefer D."/>
            <person name="Kiss H."/>
            <person name="Klenk H.P."/>
            <person name="Kyrpides N."/>
            <person name="Liebl W."/>
            <person name="Liesegang H."/>
            <person name="Meincke L."/>
            <person name="Pati A."/>
            <person name="Petersen J."/>
            <person name="Piekarski T."/>
            <person name="Pommerenke C."/>
            <person name="Pradella S."/>
            <person name="Pukall R."/>
            <person name="Rabus R."/>
            <person name="Stackebrandt E."/>
            <person name="Thole S."/>
            <person name="Thompson L."/>
            <person name="Tielen P."/>
            <person name="Tomasch J."/>
            <person name="von Jan M."/>
            <person name="Wanphrut N."/>
            <person name="Wichels A."/>
            <person name="Zech H."/>
            <person name="Simon M."/>
        </authorList>
    </citation>
    <scope>NUCLEOTIDE SEQUENCE [LARGE SCALE GENOMIC DNA]</scope>
    <source>
        <strain>DSM 16493 / NCIMB 14021 / DFL 12</strain>
    </source>
</reference>
<organism>
    <name type="scientific">Dinoroseobacter shibae (strain DSM 16493 / NCIMB 14021 / DFL 12)</name>
    <dbReference type="NCBI Taxonomy" id="398580"/>
    <lineage>
        <taxon>Bacteria</taxon>
        <taxon>Pseudomonadati</taxon>
        <taxon>Pseudomonadota</taxon>
        <taxon>Alphaproteobacteria</taxon>
        <taxon>Rhodobacterales</taxon>
        <taxon>Roseobacteraceae</taxon>
        <taxon>Dinoroseobacter</taxon>
    </lineage>
</organism>
<accession>A8LQL4</accession>
<sequence length="424" mass="45166">MSLIVDVYAREILDSRGNPTVEVDVTLEDGTLGRAAVPSGASTGAYEAVELRDKDTARYFGKGVKTAVAFVNGEIAEALMGIDATDQVGIDSAMIELDGTPNKSRLGANAILGVSLAVAKAAAEATGQPLYRYVGGTSARVLPVPMMNIINGGEHADNPIDIQEFMIMPVSADSIAEAVRMGAEVFHTLKKELSAAGLSTGIGDEGGFAPNLSSTRDALDFVLKAIEKAGYTPGEDIYLALDCAATEYFEDGRYEMKGEGKTLTPEANVDYLEALVNDYPILSIEDGCSEDDWEGWALLTERLGDRVQLVGDDLFVTNPARLAEGIQKGCANSLLVKVNQIGTLTETLSAVDLAHRNRMTCVMSHRSGETEDATIADLAVATNCGQIKTGSLARSDRLAKYNQLIRIEDELGETAIYAGRSILR</sequence>
<evidence type="ECO:0000255" key="1">
    <source>
        <dbReference type="HAMAP-Rule" id="MF_00318"/>
    </source>
</evidence>
<comment type="function">
    <text evidence="1">Catalyzes the reversible conversion of 2-phosphoglycerate (2-PG) into phosphoenolpyruvate (PEP). It is essential for the degradation of carbohydrates via glycolysis.</text>
</comment>
<comment type="catalytic activity">
    <reaction evidence="1">
        <text>(2R)-2-phosphoglycerate = phosphoenolpyruvate + H2O</text>
        <dbReference type="Rhea" id="RHEA:10164"/>
        <dbReference type="ChEBI" id="CHEBI:15377"/>
        <dbReference type="ChEBI" id="CHEBI:58289"/>
        <dbReference type="ChEBI" id="CHEBI:58702"/>
        <dbReference type="EC" id="4.2.1.11"/>
    </reaction>
</comment>
<comment type="cofactor">
    <cofactor evidence="1">
        <name>Mg(2+)</name>
        <dbReference type="ChEBI" id="CHEBI:18420"/>
    </cofactor>
    <text evidence="1">Binds a second Mg(2+) ion via substrate during catalysis.</text>
</comment>
<comment type="pathway">
    <text evidence="1">Carbohydrate degradation; glycolysis; pyruvate from D-glyceraldehyde 3-phosphate: step 4/5.</text>
</comment>
<comment type="subcellular location">
    <subcellularLocation>
        <location evidence="1">Cytoplasm</location>
    </subcellularLocation>
    <subcellularLocation>
        <location evidence="1">Secreted</location>
    </subcellularLocation>
    <subcellularLocation>
        <location evidence="1">Cell surface</location>
    </subcellularLocation>
    <text evidence="1">Fractions of enolase are present in both the cytoplasm and on the cell surface.</text>
</comment>
<comment type="similarity">
    <text evidence="1">Belongs to the enolase family.</text>
</comment>